<feature type="chain" id="PRO_1000057307" description="Aspartate--tRNA ligase">
    <location>
        <begin position="1"/>
        <end position="585"/>
    </location>
</feature>
<feature type="region of interest" description="Aspartate" evidence="1">
    <location>
        <begin position="193"/>
        <end position="196"/>
    </location>
</feature>
<feature type="binding site" evidence="1">
    <location>
        <position position="169"/>
    </location>
    <ligand>
        <name>L-aspartate</name>
        <dbReference type="ChEBI" id="CHEBI:29991"/>
    </ligand>
</feature>
<feature type="binding site" evidence="1">
    <location>
        <begin position="215"/>
        <end position="217"/>
    </location>
    <ligand>
        <name>ATP</name>
        <dbReference type="ChEBI" id="CHEBI:30616"/>
    </ligand>
</feature>
<feature type="binding site" evidence="1">
    <location>
        <position position="215"/>
    </location>
    <ligand>
        <name>L-aspartate</name>
        <dbReference type="ChEBI" id="CHEBI:29991"/>
    </ligand>
</feature>
<feature type="binding site" evidence="1">
    <location>
        <position position="224"/>
    </location>
    <ligand>
        <name>ATP</name>
        <dbReference type="ChEBI" id="CHEBI:30616"/>
    </ligand>
</feature>
<feature type="binding site" evidence="1">
    <location>
        <position position="443"/>
    </location>
    <ligand>
        <name>L-aspartate</name>
        <dbReference type="ChEBI" id="CHEBI:29991"/>
    </ligand>
</feature>
<feature type="binding site" evidence="1">
    <location>
        <position position="478"/>
    </location>
    <ligand>
        <name>ATP</name>
        <dbReference type="ChEBI" id="CHEBI:30616"/>
    </ligand>
</feature>
<feature type="binding site" evidence="1">
    <location>
        <position position="485"/>
    </location>
    <ligand>
        <name>L-aspartate</name>
        <dbReference type="ChEBI" id="CHEBI:29991"/>
    </ligand>
</feature>
<feature type="binding site" evidence="1">
    <location>
        <begin position="530"/>
        <end position="533"/>
    </location>
    <ligand>
        <name>ATP</name>
        <dbReference type="ChEBI" id="CHEBI:30616"/>
    </ligand>
</feature>
<sequence>MLRTHTCGELTIKDVGKKVILAGWIDRIRDLGGVKFLMLRDRYGQTQIILSQNCQINLRRESVVQIEGVVQKRPEETINKDLLTGEIEVFAEKVNVFSSPEKDLPFYPGETKLPAEEIRLKYRYIDLRRKEVSDRIITRHKVTQCIRNYLSKNGFIEVETPFLTKSTPEGARDFLVPSRLKPGTFYALPQSPQLFKQLLMIGGIDRYFQVVRCFRDEDLRADRQPEFTQIDIEMSFNTMDDVLEITEGMIKHLFKEVLQVDLPGKLDRLTYNECMNKYGSDKPDRRIGMEFFDLSKHFKTCEYHAINAELSSGGVVKGFVVRDFANKMSRKLADELNEIAKSLGGGGILWFSFDSPESIKGAGAKYLQKNYNSVAKELSINYNDVCVLSAGKIDIVNTVLGEVRKILGERYFSDLRKGFDIFWVTDFPMFEYSEEENRFVAQHHPFTMPNLDDLKKYKNSDLSKIRAQSYDIVINGFEVGSGSIRIHDAELQREIFKLMRLTEEEVKLKFGFLLEAFQYGAPPHGGIALGLDRLTAIICGVPTIREVIAFPKTSSGICPLTGAPDVVNQKQLDELKIILGGDHCE</sequence>
<evidence type="ECO:0000255" key="1">
    <source>
        <dbReference type="HAMAP-Rule" id="MF_00044"/>
    </source>
</evidence>
<protein>
    <recommendedName>
        <fullName evidence="1">Aspartate--tRNA ligase</fullName>
        <ecNumber evidence="1">6.1.1.12</ecNumber>
    </recommendedName>
    <alternativeName>
        <fullName evidence="1">Aspartyl-tRNA synthetase</fullName>
        <shortName evidence="1">AspRS</shortName>
    </alternativeName>
</protein>
<proteinExistence type="inferred from homology"/>
<gene>
    <name evidence="1" type="primary">aspS</name>
    <name type="ordered locus">Tlet_1647</name>
</gene>
<comment type="function">
    <text evidence="1">Catalyzes the attachment of L-aspartate to tRNA(Asp) in a two-step reaction: L-aspartate is first activated by ATP to form Asp-AMP and then transferred to the acceptor end of tRNA(Asp).</text>
</comment>
<comment type="catalytic activity">
    <reaction evidence="1">
        <text>tRNA(Asp) + L-aspartate + ATP = L-aspartyl-tRNA(Asp) + AMP + diphosphate</text>
        <dbReference type="Rhea" id="RHEA:19649"/>
        <dbReference type="Rhea" id="RHEA-COMP:9660"/>
        <dbReference type="Rhea" id="RHEA-COMP:9678"/>
        <dbReference type="ChEBI" id="CHEBI:29991"/>
        <dbReference type="ChEBI" id="CHEBI:30616"/>
        <dbReference type="ChEBI" id="CHEBI:33019"/>
        <dbReference type="ChEBI" id="CHEBI:78442"/>
        <dbReference type="ChEBI" id="CHEBI:78516"/>
        <dbReference type="ChEBI" id="CHEBI:456215"/>
        <dbReference type="EC" id="6.1.1.12"/>
    </reaction>
</comment>
<comment type="subunit">
    <text evidence="1">Homodimer.</text>
</comment>
<comment type="subcellular location">
    <subcellularLocation>
        <location evidence="1">Cytoplasm</location>
    </subcellularLocation>
</comment>
<comment type="similarity">
    <text evidence="1">Belongs to the class-II aminoacyl-tRNA synthetase family. Type 1 subfamily.</text>
</comment>
<dbReference type="EC" id="6.1.1.12" evidence="1"/>
<dbReference type="EMBL" id="CP000812">
    <property type="protein sequence ID" value="ABV34201.1"/>
    <property type="molecule type" value="Genomic_DNA"/>
</dbReference>
<dbReference type="RefSeq" id="WP_012003677.1">
    <property type="nucleotide sequence ID" value="NZ_BSDV01000001.1"/>
</dbReference>
<dbReference type="SMR" id="A8F7R7"/>
<dbReference type="STRING" id="416591.Tlet_1647"/>
<dbReference type="KEGG" id="tle:Tlet_1647"/>
<dbReference type="eggNOG" id="COG0173">
    <property type="taxonomic scope" value="Bacteria"/>
</dbReference>
<dbReference type="HOGENOM" id="CLU_014330_3_2_0"/>
<dbReference type="OrthoDB" id="9802326at2"/>
<dbReference type="Proteomes" id="UP000002016">
    <property type="component" value="Chromosome"/>
</dbReference>
<dbReference type="GO" id="GO:0005737">
    <property type="term" value="C:cytoplasm"/>
    <property type="evidence" value="ECO:0007669"/>
    <property type="project" value="UniProtKB-SubCell"/>
</dbReference>
<dbReference type="GO" id="GO:0004815">
    <property type="term" value="F:aspartate-tRNA ligase activity"/>
    <property type="evidence" value="ECO:0007669"/>
    <property type="project" value="UniProtKB-UniRule"/>
</dbReference>
<dbReference type="GO" id="GO:0005524">
    <property type="term" value="F:ATP binding"/>
    <property type="evidence" value="ECO:0007669"/>
    <property type="project" value="UniProtKB-UniRule"/>
</dbReference>
<dbReference type="GO" id="GO:0003676">
    <property type="term" value="F:nucleic acid binding"/>
    <property type="evidence" value="ECO:0007669"/>
    <property type="project" value="InterPro"/>
</dbReference>
<dbReference type="GO" id="GO:0006422">
    <property type="term" value="P:aspartyl-tRNA aminoacylation"/>
    <property type="evidence" value="ECO:0007669"/>
    <property type="project" value="UniProtKB-UniRule"/>
</dbReference>
<dbReference type="CDD" id="cd00777">
    <property type="entry name" value="AspRS_core"/>
    <property type="match status" value="1"/>
</dbReference>
<dbReference type="CDD" id="cd04317">
    <property type="entry name" value="EcAspRS_like_N"/>
    <property type="match status" value="1"/>
</dbReference>
<dbReference type="Gene3D" id="3.30.930.10">
    <property type="entry name" value="Bira Bifunctional Protein, Domain 2"/>
    <property type="match status" value="1"/>
</dbReference>
<dbReference type="Gene3D" id="3.30.1360.30">
    <property type="entry name" value="GAD-like domain"/>
    <property type="match status" value="1"/>
</dbReference>
<dbReference type="Gene3D" id="2.40.50.140">
    <property type="entry name" value="Nucleic acid-binding proteins"/>
    <property type="match status" value="1"/>
</dbReference>
<dbReference type="HAMAP" id="MF_00044">
    <property type="entry name" value="Asp_tRNA_synth_type1"/>
    <property type="match status" value="1"/>
</dbReference>
<dbReference type="InterPro" id="IPR004364">
    <property type="entry name" value="Aa-tRNA-synt_II"/>
</dbReference>
<dbReference type="InterPro" id="IPR006195">
    <property type="entry name" value="aa-tRNA-synth_II"/>
</dbReference>
<dbReference type="InterPro" id="IPR045864">
    <property type="entry name" value="aa-tRNA-synth_II/BPL/LPL"/>
</dbReference>
<dbReference type="InterPro" id="IPR004524">
    <property type="entry name" value="Asp-tRNA-ligase_1"/>
</dbReference>
<dbReference type="InterPro" id="IPR047089">
    <property type="entry name" value="Asp-tRNA-ligase_1_N"/>
</dbReference>
<dbReference type="InterPro" id="IPR002312">
    <property type="entry name" value="Asp/Asn-tRNA-synth_IIb"/>
</dbReference>
<dbReference type="InterPro" id="IPR047090">
    <property type="entry name" value="AspRS_core"/>
</dbReference>
<dbReference type="InterPro" id="IPR004115">
    <property type="entry name" value="GAD-like_sf"/>
</dbReference>
<dbReference type="InterPro" id="IPR029351">
    <property type="entry name" value="GAD_dom"/>
</dbReference>
<dbReference type="InterPro" id="IPR012340">
    <property type="entry name" value="NA-bd_OB-fold"/>
</dbReference>
<dbReference type="InterPro" id="IPR004365">
    <property type="entry name" value="NA-bd_OB_tRNA"/>
</dbReference>
<dbReference type="NCBIfam" id="TIGR00459">
    <property type="entry name" value="aspS_bact"/>
    <property type="match status" value="1"/>
</dbReference>
<dbReference type="NCBIfam" id="NF001750">
    <property type="entry name" value="PRK00476.1"/>
    <property type="match status" value="1"/>
</dbReference>
<dbReference type="PANTHER" id="PTHR22594:SF5">
    <property type="entry name" value="ASPARTATE--TRNA LIGASE, MITOCHONDRIAL"/>
    <property type="match status" value="1"/>
</dbReference>
<dbReference type="PANTHER" id="PTHR22594">
    <property type="entry name" value="ASPARTYL/LYSYL-TRNA SYNTHETASE"/>
    <property type="match status" value="1"/>
</dbReference>
<dbReference type="Pfam" id="PF02938">
    <property type="entry name" value="GAD"/>
    <property type="match status" value="1"/>
</dbReference>
<dbReference type="Pfam" id="PF00152">
    <property type="entry name" value="tRNA-synt_2"/>
    <property type="match status" value="1"/>
</dbReference>
<dbReference type="Pfam" id="PF01336">
    <property type="entry name" value="tRNA_anti-codon"/>
    <property type="match status" value="1"/>
</dbReference>
<dbReference type="PRINTS" id="PR01042">
    <property type="entry name" value="TRNASYNTHASP"/>
</dbReference>
<dbReference type="SUPFAM" id="SSF55681">
    <property type="entry name" value="Class II aaRS and biotin synthetases"/>
    <property type="match status" value="1"/>
</dbReference>
<dbReference type="SUPFAM" id="SSF55261">
    <property type="entry name" value="GAD domain-like"/>
    <property type="match status" value="1"/>
</dbReference>
<dbReference type="SUPFAM" id="SSF50249">
    <property type="entry name" value="Nucleic acid-binding proteins"/>
    <property type="match status" value="1"/>
</dbReference>
<dbReference type="PROSITE" id="PS50862">
    <property type="entry name" value="AA_TRNA_LIGASE_II"/>
    <property type="match status" value="1"/>
</dbReference>
<name>SYD_PSELT</name>
<accession>A8F7R7</accession>
<organism>
    <name type="scientific">Pseudothermotoga lettingae (strain ATCC BAA-301 / DSM 14385 / NBRC 107922 / TMO)</name>
    <name type="common">Thermotoga lettingae</name>
    <dbReference type="NCBI Taxonomy" id="416591"/>
    <lineage>
        <taxon>Bacteria</taxon>
        <taxon>Thermotogati</taxon>
        <taxon>Thermotogota</taxon>
        <taxon>Thermotogae</taxon>
        <taxon>Thermotogales</taxon>
        <taxon>Thermotogaceae</taxon>
        <taxon>Pseudothermotoga</taxon>
    </lineage>
</organism>
<reference key="1">
    <citation type="submission" date="2007-08" db="EMBL/GenBank/DDBJ databases">
        <title>Complete sequence of Thermotoga lettingae TMO.</title>
        <authorList>
            <consortium name="US DOE Joint Genome Institute"/>
            <person name="Copeland A."/>
            <person name="Lucas S."/>
            <person name="Lapidus A."/>
            <person name="Barry K."/>
            <person name="Glavina del Rio T."/>
            <person name="Dalin E."/>
            <person name="Tice H."/>
            <person name="Pitluck S."/>
            <person name="Foster B."/>
            <person name="Bruce D."/>
            <person name="Schmutz J."/>
            <person name="Larimer F."/>
            <person name="Land M."/>
            <person name="Hauser L."/>
            <person name="Kyrpides N."/>
            <person name="Mikhailova N."/>
            <person name="Nelson K."/>
            <person name="Gogarten J.P."/>
            <person name="Noll K."/>
            <person name="Richardson P."/>
        </authorList>
    </citation>
    <scope>NUCLEOTIDE SEQUENCE [LARGE SCALE GENOMIC DNA]</scope>
    <source>
        <strain>ATCC BAA-301 / DSM 14385 / NBRC 107922 / TMO</strain>
    </source>
</reference>
<keyword id="KW-0030">Aminoacyl-tRNA synthetase</keyword>
<keyword id="KW-0067">ATP-binding</keyword>
<keyword id="KW-0963">Cytoplasm</keyword>
<keyword id="KW-0436">Ligase</keyword>
<keyword id="KW-0547">Nucleotide-binding</keyword>
<keyword id="KW-0648">Protein biosynthesis</keyword>
<keyword id="KW-1185">Reference proteome</keyword>